<organism>
    <name type="scientific">Leuconostoc mesenteroides subsp. mesenteroides (strain ATCC 8293 / DSM 20343 / BCRC 11652 / CCM 1803 / JCM 6124 / NCDO 523 / NBRC 100496 / NCIMB 8023 / NCTC 12954 / NRRL B-1118 / 37Y)</name>
    <dbReference type="NCBI Taxonomy" id="203120"/>
    <lineage>
        <taxon>Bacteria</taxon>
        <taxon>Bacillati</taxon>
        <taxon>Bacillota</taxon>
        <taxon>Bacilli</taxon>
        <taxon>Lactobacillales</taxon>
        <taxon>Lactobacillaceae</taxon>
        <taxon>Leuconostoc</taxon>
    </lineage>
</organism>
<feature type="chain" id="PRO_0000293817" description="Small ribosomal subunit protein uS3">
    <location>
        <begin position="1"/>
        <end position="223"/>
    </location>
</feature>
<feature type="domain" description="KH type-2" evidence="1">
    <location>
        <begin position="39"/>
        <end position="115"/>
    </location>
</feature>
<reference key="1">
    <citation type="journal article" date="2006" name="Proc. Natl. Acad. Sci. U.S.A.">
        <title>Comparative genomics of the lactic acid bacteria.</title>
        <authorList>
            <person name="Makarova K.S."/>
            <person name="Slesarev A."/>
            <person name="Wolf Y.I."/>
            <person name="Sorokin A."/>
            <person name="Mirkin B."/>
            <person name="Koonin E.V."/>
            <person name="Pavlov A."/>
            <person name="Pavlova N."/>
            <person name="Karamychev V."/>
            <person name="Polouchine N."/>
            <person name="Shakhova V."/>
            <person name="Grigoriev I."/>
            <person name="Lou Y."/>
            <person name="Rohksar D."/>
            <person name="Lucas S."/>
            <person name="Huang K."/>
            <person name="Goodstein D.M."/>
            <person name="Hawkins T."/>
            <person name="Plengvidhya V."/>
            <person name="Welker D."/>
            <person name="Hughes J."/>
            <person name="Goh Y."/>
            <person name="Benson A."/>
            <person name="Baldwin K."/>
            <person name="Lee J.-H."/>
            <person name="Diaz-Muniz I."/>
            <person name="Dosti B."/>
            <person name="Smeianov V."/>
            <person name="Wechter W."/>
            <person name="Barabote R."/>
            <person name="Lorca G."/>
            <person name="Altermann E."/>
            <person name="Barrangou R."/>
            <person name="Ganesan B."/>
            <person name="Xie Y."/>
            <person name="Rawsthorne H."/>
            <person name="Tamir D."/>
            <person name="Parker C."/>
            <person name="Breidt F."/>
            <person name="Broadbent J.R."/>
            <person name="Hutkins R."/>
            <person name="O'Sullivan D."/>
            <person name="Steele J."/>
            <person name="Unlu G."/>
            <person name="Saier M.H. Jr."/>
            <person name="Klaenhammer T."/>
            <person name="Richardson P."/>
            <person name="Kozyavkin S."/>
            <person name="Weimer B.C."/>
            <person name="Mills D.A."/>
        </authorList>
    </citation>
    <scope>NUCLEOTIDE SEQUENCE [LARGE SCALE GENOMIC DNA]</scope>
    <source>
        <strain>ATCC 8293 / DSM 20343 / BCRC 11652 / CCM 1803 / JCM 6124 / NCDO 523 / NBRC 100496 / NCIMB 8023 / NCTC 12954 / NRRL B-1118 / 37Y</strain>
    </source>
</reference>
<keyword id="KW-1185">Reference proteome</keyword>
<keyword id="KW-0687">Ribonucleoprotein</keyword>
<keyword id="KW-0689">Ribosomal protein</keyword>
<keyword id="KW-0694">RNA-binding</keyword>
<keyword id="KW-0699">rRNA-binding</keyword>
<sequence>MGQKINPTGFRVGVIRDWDAKWFADKADYANQLHEDLRIRKYIEKNLADASVDRIEIERTTKSRVDVSIQTAKPGMVIGKGGSEVEKLRTQLAKLTDTDEKGRSKRVFINIVEIKKPDLSAHLVGQQIAGDLERRVAFRRAMRGAIQRATRSGAKGIKVMVSGRLNGADIARIEQYTEGTVPLHTLRADIDYSWDEAMTAYGNLGIKTWIYRGDVLPQKKNSK</sequence>
<evidence type="ECO:0000255" key="1">
    <source>
        <dbReference type="HAMAP-Rule" id="MF_01309"/>
    </source>
</evidence>
<evidence type="ECO:0000305" key="2"/>
<comment type="function">
    <text evidence="1">Binds the lower part of the 30S subunit head. Binds mRNA in the 70S ribosome, positioning it for translation.</text>
</comment>
<comment type="subunit">
    <text evidence="1">Part of the 30S ribosomal subunit. Forms a tight complex with proteins S10 and S14.</text>
</comment>
<comment type="similarity">
    <text evidence="1">Belongs to the universal ribosomal protein uS3 family.</text>
</comment>
<name>RS3_LEUMM</name>
<gene>
    <name evidence="1" type="primary">rpsC</name>
    <name type="ordered locus">LEUM_0202</name>
</gene>
<protein>
    <recommendedName>
        <fullName evidence="1">Small ribosomal subunit protein uS3</fullName>
    </recommendedName>
    <alternativeName>
        <fullName evidence="2">30S ribosomal protein S3</fullName>
    </alternativeName>
</protein>
<dbReference type="EMBL" id="CP000414">
    <property type="protein sequence ID" value="ABJ61333.1"/>
    <property type="molecule type" value="Genomic_DNA"/>
</dbReference>
<dbReference type="RefSeq" id="WP_002816031.1">
    <property type="nucleotide sequence ID" value="NC_008531.1"/>
</dbReference>
<dbReference type="SMR" id="Q03ZN9"/>
<dbReference type="EnsemblBacteria" id="ABJ61333">
    <property type="protein sequence ID" value="ABJ61333"/>
    <property type="gene ID" value="LEUM_0202"/>
</dbReference>
<dbReference type="GeneID" id="97504975"/>
<dbReference type="KEGG" id="lme:LEUM_0202"/>
<dbReference type="eggNOG" id="COG0092">
    <property type="taxonomic scope" value="Bacteria"/>
</dbReference>
<dbReference type="HOGENOM" id="CLU_058591_0_2_9"/>
<dbReference type="Proteomes" id="UP000000362">
    <property type="component" value="Chromosome"/>
</dbReference>
<dbReference type="GO" id="GO:0022627">
    <property type="term" value="C:cytosolic small ribosomal subunit"/>
    <property type="evidence" value="ECO:0007669"/>
    <property type="project" value="TreeGrafter"/>
</dbReference>
<dbReference type="GO" id="GO:0003729">
    <property type="term" value="F:mRNA binding"/>
    <property type="evidence" value="ECO:0007669"/>
    <property type="project" value="UniProtKB-UniRule"/>
</dbReference>
<dbReference type="GO" id="GO:0019843">
    <property type="term" value="F:rRNA binding"/>
    <property type="evidence" value="ECO:0007669"/>
    <property type="project" value="UniProtKB-UniRule"/>
</dbReference>
<dbReference type="GO" id="GO:0003735">
    <property type="term" value="F:structural constituent of ribosome"/>
    <property type="evidence" value="ECO:0007669"/>
    <property type="project" value="InterPro"/>
</dbReference>
<dbReference type="GO" id="GO:0006412">
    <property type="term" value="P:translation"/>
    <property type="evidence" value="ECO:0007669"/>
    <property type="project" value="UniProtKB-UniRule"/>
</dbReference>
<dbReference type="CDD" id="cd02412">
    <property type="entry name" value="KH-II_30S_S3"/>
    <property type="match status" value="1"/>
</dbReference>
<dbReference type="FunFam" id="3.30.300.20:FF:000001">
    <property type="entry name" value="30S ribosomal protein S3"/>
    <property type="match status" value="1"/>
</dbReference>
<dbReference type="Gene3D" id="3.30.300.20">
    <property type="match status" value="1"/>
</dbReference>
<dbReference type="Gene3D" id="3.30.1140.32">
    <property type="entry name" value="Ribosomal protein S3, C-terminal domain"/>
    <property type="match status" value="1"/>
</dbReference>
<dbReference type="HAMAP" id="MF_01309_B">
    <property type="entry name" value="Ribosomal_uS3_B"/>
    <property type="match status" value="1"/>
</dbReference>
<dbReference type="InterPro" id="IPR004087">
    <property type="entry name" value="KH_dom"/>
</dbReference>
<dbReference type="InterPro" id="IPR015946">
    <property type="entry name" value="KH_dom-like_a/b"/>
</dbReference>
<dbReference type="InterPro" id="IPR004044">
    <property type="entry name" value="KH_dom_type_2"/>
</dbReference>
<dbReference type="InterPro" id="IPR009019">
    <property type="entry name" value="KH_sf_prok-type"/>
</dbReference>
<dbReference type="InterPro" id="IPR036419">
    <property type="entry name" value="Ribosomal_S3_C_sf"/>
</dbReference>
<dbReference type="InterPro" id="IPR005704">
    <property type="entry name" value="Ribosomal_uS3_bac-typ"/>
</dbReference>
<dbReference type="InterPro" id="IPR001351">
    <property type="entry name" value="Ribosomal_uS3_C"/>
</dbReference>
<dbReference type="InterPro" id="IPR018280">
    <property type="entry name" value="Ribosomal_uS3_CS"/>
</dbReference>
<dbReference type="NCBIfam" id="TIGR01009">
    <property type="entry name" value="rpsC_bact"/>
    <property type="match status" value="1"/>
</dbReference>
<dbReference type="PANTHER" id="PTHR11760">
    <property type="entry name" value="30S/40S RIBOSOMAL PROTEIN S3"/>
    <property type="match status" value="1"/>
</dbReference>
<dbReference type="PANTHER" id="PTHR11760:SF19">
    <property type="entry name" value="SMALL RIBOSOMAL SUBUNIT PROTEIN US3C"/>
    <property type="match status" value="1"/>
</dbReference>
<dbReference type="Pfam" id="PF07650">
    <property type="entry name" value="KH_2"/>
    <property type="match status" value="1"/>
</dbReference>
<dbReference type="Pfam" id="PF00189">
    <property type="entry name" value="Ribosomal_S3_C"/>
    <property type="match status" value="1"/>
</dbReference>
<dbReference type="SMART" id="SM00322">
    <property type="entry name" value="KH"/>
    <property type="match status" value="1"/>
</dbReference>
<dbReference type="SUPFAM" id="SSF54814">
    <property type="entry name" value="Prokaryotic type KH domain (KH-domain type II)"/>
    <property type="match status" value="1"/>
</dbReference>
<dbReference type="SUPFAM" id="SSF54821">
    <property type="entry name" value="Ribosomal protein S3 C-terminal domain"/>
    <property type="match status" value="1"/>
</dbReference>
<dbReference type="PROSITE" id="PS50823">
    <property type="entry name" value="KH_TYPE_2"/>
    <property type="match status" value="1"/>
</dbReference>
<dbReference type="PROSITE" id="PS00548">
    <property type="entry name" value="RIBOSOMAL_S3"/>
    <property type="match status" value="1"/>
</dbReference>
<proteinExistence type="inferred from homology"/>
<accession>Q03ZN9</accession>